<name>Y285_TREPA</name>
<dbReference type="EMBL" id="AE000520">
    <property type="protein sequence ID" value="AAC65281.1"/>
    <property type="molecule type" value="Genomic_DNA"/>
</dbReference>
<dbReference type="PIR" id="H71343">
    <property type="entry name" value="H71343"/>
</dbReference>
<dbReference type="RefSeq" id="WP_010881734.1">
    <property type="nucleotide sequence ID" value="NC_000919.1"/>
</dbReference>
<dbReference type="SMR" id="O83309"/>
<dbReference type="STRING" id="243276.TP_0285"/>
<dbReference type="EnsemblBacteria" id="AAC65281">
    <property type="protein sequence ID" value="AAC65281"/>
    <property type="gene ID" value="TP_0285"/>
</dbReference>
<dbReference type="KEGG" id="tpa:TP_0285"/>
<dbReference type="eggNOG" id="COG0731">
    <property type="taxonomic scope" value="Bacteria"/>
</dbReference>
<dbReference type="HOGENOM" id="CLU_035710_0_0_12"/>
<dbReference type="Proteomes" id="UP000000811">
    <property type="component" value="Chromosome"/>
</dbReference>
<dbReference type="CDD" id="cd21109">
    <property type="entry name" value="SPASM"/>
    <property type="match status" value="1"/>
</dbReference>
<dbReference type="Gene3D" id="3.20.20.70">
    <property type="entry name" value="Aldolase class I"/>
    <property type="match status" value="1"/>
</dbReference>
<dbReference type="InterPro" id="IPR023885">
    <property type="entry name" value="4Fe4S-binding_SPASM_dom"/>
</dbReference>
<dbReference type="InterPro" id="IPR013785">
    <property type="entry name" value="Aldolase_TIM"/>
</dbReference>
<dbReference type="InterPro" id="IPR050377">
    <property type="entry name" value="Radical_SAM_PqqE_MftC-like"/>
</dbReference>
<dbReference type="InterPro" id="IPR027608">
    <property type="entry name" value="Spiro_SPASM"/>
</dbReference>
<dbReference type="NCBIfam" id="TIGR04321">
    <property type="entry name" value="spiroSPASM"/>
    <property type="match status" value="1"/>
</dbReference>
<dbReference type="PANTHER" id="PTHR11228:SF7">
    <property type="entry name" value="PQQA PEPTIDE CYCLASE"/>
    <property type="match status" value="1"/>
</dbReference>
<dbReference type="PANTHER" id="PTHR11228">
    <property type="entry name" value="RADICAL SAM DOMAIN PROTEIN"/>
    <property type="match status" value="1"/>
</dbReference>
<dbReference type="Pfam" id="PF13186">
    <property type="entry name" value="SPASM"/>
    <property type="match status" value="1"/>
</dbReference>
<dbReference type="SUPFAM" id="SSF102114">
    <property type="entry name" value="Radical SAM enzymes"/>
    <property type="match status" value="1"/>
</dbReference>
<accession>O83309</accession>
<feature type="chain" id="PRO_0000202227" description="Uncharacterized protein TP_0285">
    <location>
        <begin position="1"/>
        <end position="359"/>
    </location>
</feature>
<organism>
    <name type="scientific">Treponema pallidum (strain Nichols)</name>
    <dbReference type="NCBI Taxonomy" id="243276"/>
    <lineage>
        <taxon>Bacteria</taxon>
        <taxon>Pseudomonadati</taxon>
        <taxon>Spirochaetota</taxon>
        <taxon>Spirochaetia</taxon>
        <taxon>Spirochaetales</taxon>
        <taxon>Treponemataceae</taxon>
        <taxon>Treponema</taxon>
    </lineage>
</organism>
<keyword id="KW-1185">Reference proteome</keyword>
<reference key="1">
    <citation type="journal article" date="1998" name="Science">
        <title>Complete genome sequence of Treponema pallidum, the syphilis spirochete.</title>
        <authorList>
            <person name="Fraser C.M."/>
            <person name="Norris S.J."/>
            <person name="Weinstock G.M."/>
            <person name="White O."/>
            <person name="Sutton G.G."/>
            <person name="Dodson R.J."/>
            <person name="Gwinn M.L."/>
            <person name="Hickey E.K."/>
            <person name="Clayton R.A."/>
            <person name="Ketchum K.A."/>
            <person name="Sodergren E."/>
            <person name="Hardham J.M."/>
            <person name="McLeod M.P."/>
            <person name="Salzberg S.L."/>
            <person name="Peterson J.D."/>
            <person name="Khalak H.G."/>
            <person name="Richardson D.L."/>
            <person name="Howell J.K."/>
            <person name="Chidambaram M."/>
            <person name="Utterback T.R."/>
            <person name="McDonald L.A."/>
            <person name="Artiach P."/>
            <person name="Bowman C."/>
            <person name="Cotton M.D."/>
            <person name="Fujii C."/>
            <person name="Garland S.A."/>
            <person name="Hatch B."/>
            <person name="Horst K."/>
            <person name="Roberts K.M."/>
            <person name="Sandusky M."/>
            <person name="Weidman J.F."/>
            <person name="Smith H.O."/>
            <person name="Venter J.C."/>
        </authorList>
    </citation>
    <scope>NUCLEOTIDE SEQUENCE [LARGE SCALE GENOMIC DNA]</scope>
    <source>
        <strain>Nichols</strain>
    </source>
</reference>
<proteinExistence type="predicted"/>
<protein>
    <recommendedName>
        <fullName>Uncharacterized protein TP_0285</fullName>
    </recommendedName>
</protein>
<gene>
    <name type="ordered locus">TP_0285</name>
</gene>
<sequence>MFCTSFIFESIKTDINSFDLETMIAPVDVRHLRLEFYTSSKAQFLQCAAFTDITAENYAQLISAREHALRTVPAYYALELTRAYPLSSLYRPVSFPAQVENASLMPKEEACALIRRIADFSERAVISLSVFGDPVLYPALCDVVREILKYPGLSVLIETSGLGWQESVVRDLCECARNSARTPFAIGWIVFLDAVSSGMYSQVHRVSLSEAEFFLKEATEFAMQVHAQCPGVLWPQIFRMNENEKELEPFYRTWKERVGQVIVQKYDHVCGLLPDRRVADLSPLERYPCWHLKRDMIIFTDGRVPLCKEDVHCRHALGNAFQQDLAQIWRRGQDVYLQHVRAVHEGLCGQCDEYYTYNF</sequence>